<sequence length="99" mass="11326">MALTKAEMSEYLFEKLGLSKRDAKELVELFFEEVRRALENGEQVKLSGFGNFDLRDKNQRPGRNPKTGEDIPITARRVVTFRPGQKLKSRVENASPKES</sequence>
<keyword id="KW-0233">DNA recombination</keyword>
<keyword id="KW-0238">DNA-binding</keyword>
<keyword id="KW-1185">Reference proteome</keyword>
<keyword id="KW-0804">Transcription</keyword>
<keyword id="KW-0805">Transcription regulation</keyword>
<keyword id="KW-0810">Translation regulation</keyword>
<evidence type="ECO:0000250" key="1"/>
<evidence type="ECO:0000256" key="2">
    <source>
        <dbReference type="SAM" id="MobiDB-lite"/>
    </source>
</evidence>
<evidence type="ECO:0000305" key="3"/>
<organism>
    <name type="scientific">Dickeya dadantii (strain 3937)</name>
    <name type="common">Erwinia chrysanthemi (strain 3937)</name>
    <dbReference type="NCBI Taxonomy" id="198628"/>
    <lineage>
        <taxon>Bacteria</taxon>
        <taxon>Pseudomonadati</taxon>
        <taxon>Pseudomonadota</taxon>
        <taxon>Gammaproteobacteria</taxon>
        <taxon>Enterobacterales</taxon>
        <taxon>Pectobacteriaceae</taxon>
        <taxon>Dickeya</taxon>
    </lineage>
</organism>
<protein>
    <recommendedName>
        <fullName>Integration host factor subunit alpha</fullName>
        <shortName>IHF-alpha</shortName>
    </recommendedName>
</protein>
<comment type="function">
    <text evidence="1">This protein is one of the two subunits of integration host factor, a specific DNA-binding protein that functions in genetic recombination as well as in transcriptional and translational control.</text>
</comment>
<comment type="subunit">
    <text>Heterodimer of an alpha and a beta chain.</text>
</comment>
<comment type="similarity">
    <text evidence="3">Belongs to the bacterial histone-like protein family.</text>
</comment>
<name>IHFA_DICD3</name>
<dbReference type="EMBL" id="X74749">
    <property type="protein sequence ID" value="CAA52768.1"/>
    <property type="molecule type" value="Genomic_DNA"/>
</dbReference>
<dbReference type="EMBL" id="CP002038">
    <property type="protein sequence ID" value="ADM98630.1"/>
    <property type="molecule type" value="Genomic_DNA"/>
</dbReference>
<dbReference type="PIR" id="S37140">
    <property type="entry name" value="S37140"/>
</dbReference>
<dbReference type="RefSeq" id="WP_012769674.1">
    <property type="nucleotide sequence ID" value="NC_014500.1"/>
</dbReference>
<dbReference type="SMR" id="P37982"/>
<dbReference type="STRING" id="198628.Dda3937_03677"/>
<dbReference type="GeneID" id="60868512"/>
<dbReference type="KEGG" id="ddd:Dda3937_03677"/>
<dbReference type="eggNOG" id="COG0776">
    <property type="taxonomic scope" value="Bacteria"/>
</dbReference>
<dbReference type="HOGENOM" id="CLU_105066_1_3_6"/>
<dbReference type="OrthoDB" id="9797747at2"/>
<dbReference type="Proteomes" id="UP000006859">
    <property type="component" value="Chromosome"/>
</dbReference>
<dbReference type="GO" id="GO:0005829">
    <property type="term" value="C:cytosol"/>
    <property type="evidence" value="ECO:0007669"/>
    <property type="project" value="TreeGrafter"/>
</dbReference>
<dbReference type="GO" id="GO:0003677">
    <property type="term" value="F:DNA binding"/>
    <property type="evidence" value="ECO:0007669"/>
    <property type="project" value="UniProtKB-UniRule"/>
</dbReference>
<dbReference type="GO" id="GO:0030527">
    <property type="term" value="F:structural constituent of chromatin"/>
    <property type="evidence" value="ECO:0007669"/>
    <property type="project" value="InterPro"/>
</dbReference>
<dbReference type="GO" id="GO:0006310">
    <property type="term" value="P:DNA recombination"/>
    <property type="evidence" value="ECO:0007669"/>
    <property type="project" value="UniProtKB-UniRule"/>
</dbReference>
<dbReference type="GO" id="GO:0009893">
    <property type="term" value="P:positive regulation of metabolic process"/>
    <property type="evidence" value="ECO:0007669"/>
    <property type="project" value="UniProtKB-ARBA"/>
</dbReference>
<dbReference type="GO" id="GO:0006355">
    <property type="term" value="P:regulation of DNA-templated transcription"/>
    <property type="evidence" value="ECO:0007669"/>
    <property type="project" value="UniProtKB-UniRule"/>
</dbReference>
<dbReference type="GO" id="GO:0006417">
    <property type="term" value="P:regulation of translation"/>
    <property type="evidence" value="ECO:0007669"/>
    <property type="project" value="UniProtKB-UniRule"/>
</dbReference>
<dbReference type="CDD" id="cd13835">
    <property type="entry name" value="IHF_A"/>
    <property type="match status" value="1"/>
</dbReference>
<dbReference type="FunFam" id="4.10.520.10:FF:000002">
    <property type="entry name" value="Integration host factor subunit alpha"/>
    <property type="match status" value="1"/>
</dbReference>
<dbReference type="Gene3D" id="4.10.520.10">
    <property type="entry name" value="IHF-like DNA-binding proteins"/>
    <property type="match status" value="1"/>
</dbReference>
<dbReference type="HAMAP" id="MF_00380">
    <property type="entry name" value="IHF_alpha"/>
    <property type="match status" value="1"/>
</dbReference>
<dbReference type="InterPro" id="IPR000119">
    <property type="entry name" value="Hist_DNA-bd"/>
</dbReference>
<dbReference type="InterPro" id="IPR020816">
    <property type="entry name" value="Histone-like_DNA-bd_CS"/>
</dbReference>
<dbReference type="InterPro" id="IPR010992">
    <property type="entry name" value="IHF-like_DNA-bd_dom_sf"/>
</dbReference>
<dbReference type="InterPro" id="IPR005684">
    <property type="entry name" value="IHF_alpha"/>
</dbReference>
<dbReference type="NCBIfam" id="TIGR00987">
    <property type="entry name" value="himA"/>
    <property type="match status" value="1"/>
</dbReference>
<dbReference type="NCBIfam" id="NF001401">
    <property type="entry name" value="PRK00285.1"/>
    <property type="match status" value="1"/>
</dbReference>
<dbReference type="PANTHER" id="PTHR33175">
    <property type="entry name" value="DNA-BINDING PROTEIN HU"/>
    <property type="match status" value="1"/>
</dbReference>
<dbReference type="PANTHER" id="PTHR33175:SF2">
    <property type="entry name" value="INTEGRATION HOST FACTOR SUBUNIT ALPHA"/>
    <property type="match status" value="1"/>
</dbReference>
<dbReference type="Pfam" id="PF00216">
    <property type="entry name" value="Bac_DNA_binding"/>
    <property type="match status" value="1"/>
</dbReference>
<dbReference type="PRINTS" id="PR01727">
    <property type="entry name" value="DNABINDINGHU"/>
</dbReference>
<dbReference type="SMART" id="SM00411">
    <property type="entry name" value="BHL"/>
    <property type="match status" value="1"/>
</dbReference>
<dbReference type="SUPFAM" id="SSF47729">
    <property type="entry name" value="IHF-like DNA-binding proteins"/>
    <property type="match status" value="1"/>
</dbReference>
<dbReference type="PROSITE" id="PS00045">
    <property type="entry name" value="HISTONE_LIKE"/>
    <property type="match status" value="1"/>
</dbReference>
<feature type="chain" id="PRO_0000105008" description="Integration host factor subunit alpha">
    <location>
        <begin position="1"/>
        <end position="99"/>
    </location>
</feature>
<feature type="region of interest" description="Disordered" evidence="2">
    <location>
        <begin position="51"/>
        <end position="71"/>
    </location>
</feature>
<reference key="1">
    <citation type="journal article" date="1994" name="Biochimie">
        <title>Identification of the integration host factor genes of Erwinia chrysanthemi 3937.</title>
        <authorList>
            <person name="Douillie A."/>
            <person name="Toussaint A."/>
            <person name="Faelen M."/>
        </authorList>
    </citation>
    <scope>NUCLEOTIDE SEQUENCE [GENOMIC DNA]</scope>
    <source>
        <strain>3937</strain>
    </source>
</reference>
<reference key="2">
    <citation type="journal article" date="2011" name="J. Bacteriol.">
        <title>Genome sequence of the plant-pathogenic bacterium Dickeya dadantii 3937.</title>
        <authorList>
            <person name="Glasner J.D."/>
            <person name="Yang C.H."/>
            <person name="Reverchon S."/>
            <person name="Hugouvieux-Cotte-Pattat N."/>
            <person name="Condemine G."/>
            <person name="Bohin J.P."/>
            <person name="Van Gijsegem F."/>
            <person name="Yang S."/>
            <person name="Franza T."/>
            <person name="Expert D."/>
            <person name="Plunkett G. III"/>
            <person name="San Francisco M.J."/>
            <person name="Charkowski A.O."/>
            <person name="Py B."/>
            <person name="Bell K."/>
            <person name="Rauscher L."/>
            <person name="Rodriguez-Palenzuela P."/>
            <person name="Toussaint A."/>
            <person name="Holeva M.C."/>
            <person name="He S.Y."/>
            <person name="Douet V."/>
            <person name="Boccara M."/>
            <person name="Blanco C."/>
            <person name="Toth I."/>
            <person name="Anderson B.D."/>
            <person name="Biehl B.S."/>
            <person name="Mau B."/>
            <person name="Flynn S.M."/>
            <person name="Barras F."/>
            <person name="Lindeberg M."/>
            <person name="Birch P.R."/>
            <person name="Tsuyumu S."/>
            <person name="Shi X."/>
            <person name="Hibbing M."/>
            <person name="Yap M.N."/>
            <person name="Carpentier M."/>
            <person name="Dassa E."/>
            <person name="Umehara M."/>
            <person name="Kim J.F."/>
            <person name="Rusch M."/>
            <person name="Soni P."/>
            <person name="Mayhew G.F."/>
            <person name="Fouts D.E."/>
            <person name="Gill S.R."/>
            <person name="Blattner F.R."/>
            <person name="Keen N.T."/>
            <person name="Perna N.T."/>
        </authorList>
    </citation>
    <scope>NUCLEOTIDE SEQUENCE [LARGE SCALE GENOMIC DNA]</scope>
    <source>
        <strain>3937</strain>
    </source>
</reference>
<proteinExistence type="inferred from homology"/>
<accession>P37982</accession>
<accession>E0SDD8</accession>
<gene>
    <name type="primary">ihfA</name>
    <name type="synonym">himA</name>
    <name type="ordered locus">Dda3937_03677</name>
</gene>